<protein>
    <recommendedName>
        <fullName evidence="1">Protein SprT-like</fullName>
    </recommendedName>
</protein>
<sequence>MKLTDYVKQVSLEDFGRPFIHHVQWNRRLRSTGGRFFPKDGHLDFNPKVYQKLGMEVFRKIVRHELCHYHLYFQGKGYQHKDRDFKELLKAVDGLRFVPSLPNSNSKPLKLYRCQSCQQRYQRKRRIDTKRYRCGLCRGKLLLINQPED</sequence>
<keyword id="KW-0963">Cytoplasm</keyword>
<keyword id="KW-0479">Metal-binding</keyword>
<keyword id="KW-0862">Zinc</keyword>
<reference key="1">
    <citation type="journal article" date="2010" name="Genome Biol.">
        <title>Structure and dynamics of the pan-genome of Streptococcus pneumoniae and closely related species.</title>
        <authorList>
            <person name="Donati C."/>
            <person name="Hiller N.L."/>
            <person name="Tettelin H."/>
            <person name="Muzzi A."/>
            <person name="Croucher N.J."/>
            <person name="Angiuoli S.V."/>
            <person name="Oggioni M."/>
            <person name="Dunning Hotopp J.C."/>
            <person name="Hu F.Z."/>
            <person name="Riley D.R."/>
            <person name="Covacci A."/>
            <person name="Mitchell T.J."/>
            <person name="Bentley S.D."/>
            <person name="Kilian M."/>
            <person name="Ehrlich G.D."/>
            <person name="Rappuoli R."/>
            <person name="Moxon E.R."/>
            <person name="Masignani V."/>
        </authorList>
    </citation>
    <scope>NUCLEOTIDE SEQUENCE [LARGE SCALE GENOMIC DNA]</scope>
    <source>
        <strain>Taiwan19F-14</strain>
    </source>
</reference>
<name>SPRTL_STRZT</name>
<feature type="chain" id="PRO_1000148330" description="Protein SprT-like">
    <location>
        <begin position="1"/>
        <end position="149"/>
    </location>
</feature>
<feature type="domain" description="SprT-like" evidence="1">
    <location>
        <begin position="4"/>
        <end position="143"/>
    </location>
</feature>
<feature type="active site" evidence="1">
    <location>
        <position position="65"/>
    </location>
</feature>
<feature type="binding site" evidence="1">
    <location>
        <position position="64"/>
    </location>
    <ligand>
        <name>Zn(2+)</name>
        <dbReference type="ChEBI" id="CHEBI:29105"/>
    </ligand>
</feature>
<feature type="binding site" evidence="1">
    <location>
        <position position="68"/>
    </location>
    <ligand>
        <name>Zn(2+)</name>
        <dbReference type="ChEBI" id="CHEBI:29105"/>
    </ligand>
</feature>
<comment type="cofactor">
    <cofactor evidence="1">
        <name>Zn(2+)</name>
        <dbReference type="ChEBI" id="CHEBI:29105"/>
    </cofactor>
    <text evidence="1">Binds 1 zinc ion.</text>
</comment>
<comment type="subcellular location">
    <subcellularLocation>
        <location evidence="1">Cytoplasm</location>
    </subcellularLocation>
</comment>
<comment type="similarity">
    <text evidence="1">Belongs to the SprT family.</text>
</comment>
<evidence type="ECO:0000255" key="1">
    <source>
        <dbReference type="HAMAP-Rule" id="MF_00745"/>
    </source>
</evidence>
<accession>C1CRY6</accession>
<proteinExistence type="inferred from homology"/>
<gene>
    <name type="ordered locus">SPT_1292</name>
</gene>
<organism>
    <name type="scientific">Streptococcus pneumoniae (strain Taiwan19F-14)</name>
    <dbReference type="NCBI Taxonomy" id="487213"/>
    <lineage>
        <taxon>Bacteria</taxon>
        <taxon>Bacillati</taxon>
        <taxon>Bacillota</taxon>
        <taxon>Bacilli</taxon>
        <taxon>Lactobacillales</taxon>
        <taxon>Streptococcaceae</taxon>
        <taxon>Streptococcus</taxon>
    </lineage>
</organism>
<dbReference type="EMBL" id="CP000921">
    <property type="protein sequence ID" value="ACO22838.1"/>
    <property type="molecule type" value="Genomic_DNA"/>
</dbReference>
<dbReference type="RefSeq" id="WP_000778595.1">
    <property type="nucleotide sequence ID" value="NC_012469.1"/>
</dbReference>
<dbReference type="KEGG" id="snt:SPT_1292"/>
<dbReference type="HOGENOM" id="CLU_123820_0_0_9"/>
<dbReference type="GO" id="GO:0005737">
    <property type="term" value="C:cytoplasm"/>
    <property type="evidence" value="ECO:0007669"/>
    <property type="project" value="UniProtKB-SubCell"/>
</dbReference>
<dbReference type="GO" id="GO:0008270">
    <property type="term" value="F:zinc ion binding"/>
    <property type="evidence" value="ECO:0007669"/>
    <property type="project" value="UniProtKB-UniRule"/>
</dbReference>
<dbReference type="GO" id="GO:0006950">
    <property type="term" value="P:response to stress"/>
    <property type="evidence" value="ECO:0007669"/>
    <property type="project" value="UniProtKB-ARBA"/>
</dbReference>
<dbReference type="HAMAP" id="MF_00745">
    <property type="entry name" value="SprT_like"/>
    <property type="match status" value="1"/>
</dbReference>
<dbReference type="InterPro" id="IPR006640">
    <property type="entry name" value="SprT-like_domain"/>
</dbReference>
<dbReference type="InterPro" id="IPR035240">
    <property type="entry name" value="SprT_Zn_ribbon"/>
</dbReference>
<dbReference type="InterPro" id="IPR023524">
    <property type="entry name" value="Uncharacterised_SprT-like"/>
</dbReference>
<dbReference type="NCBIfam" id="NF003339">
    <property type="entry name" value="PRK04351.1"/>
    <property type="match status" value="1"/>
</dbReference>
<dbReference type="Pfam" id="PF10263">
    <property type="entry name" value="SprT-like"/>
    <property type="match status" value="1"/>
</dbReference>
<dbReference type="Pfam" id="PF17283">
    <property type="entry name" value="Zn_ribbon_SprT"/>
    <property type="match status" value="1"/>
</dbReference>
<dbReference type="SMART" id="SM00731">
    <property type="entry name" value="SprT"/>
    <property type="match status" value="1"/>
</dbReference>